<dbReference type="EMBL" id="X59869">
    <property type="protein sequence ID" value="CAA42526.1"/>
    <property type="molecule type" value="mRNA"/>
</dbReference>
<dbReference type="EMBL" id="X59870">
    <property type="protein sequence ID" value="CAA42527.1"/>
    <property type="molecule type" value="mRNA"/>
</dbReference>
<dbReference type="EMBL" id="X59871">
    <property type="protein sequence ID" value="CAA42528.1"/>
    <property type="molecule type" value="mRNA"/>
</dbReference>
<dbReference type="EMBL" id="X63901">
    <property type="protein sequence ID" value="CAB56795.1"/>
    <property type="molecule type" value="Genomic_DNA"/>
</dbReference>
<dbReference type="EMBL" id="Z47361">
    <property type="protein sequence ID" value="CAA87439.1"/>
    <property type="molecule type" value="mRNA"/>
</dbReference>
<dbReference type="EMBL" id="Z47362">
    <property type="protein sequence ID" value="CAA87440.1"/>
    <property type="status" value="ALT_FRAME"/>
    <property type="molecule type" value="mRNA"/>
</dbReference>
<dbReference type="EMBL" id="Z47363">
    <property type="protein sequence ID" value="CAA87441.1"/>
    <property type="status" value="ALT_SEQ"/>
    <property type="molecule type" value="mRNA"/>
</dbReference>
<dbReference type="EMBL" id="Z47364">
    <property type="protein sequence ID" value="CAA87442.1"/>
    <property type="molecule type" value="mRNA"/>
</dbReference>
<dbReference type="EMBL" id="AK093530">
    <property type="protein sequence ID" value="BAG52735.1"/>
    <property type="molecule type" value="mRNA"/>
</dbReference>
<dbReference type="EMBL" id="AC008608">
    <property type="status" value="NOT_ANNOTATED_CDS"/>
    <property type="molecule type" value="Genomic_DNA"/>
</dbReference>
<dbReference type="EMBL" id="AC011336">
    <property type="status" value="NOT_ANNOTATED_CDS"/>
    <property type="molecule type" value="Genomic_DNA"/>
</dbReference>
<dbReference type="EMBL" id="CH471062">
    <property type="protein sequence ID" value="EAW62277.1"/>
    <property type="molecule type" value="Genomic_DNA"/>
</dbReference>
<dbReference type="EMBL" id="BC048769">
    <property type="protein sequence ID" value="AAH48769.1"/>
    <property type="molecule type" value="mRNA"/>
</dbReference>
<dbReference type="EMBL" id="BC072023">
    <property type="protein sequence ID" value="AAH72023.1"/>
    <property type="molecule type" value="mRNA"/>
</dbReference>
<dbReference type="EMBL" id="AF163776">
    <property type="protein sequence ID" value="AAF00616.1"/>
    <property type="molecule type" value="Genomic_DNA"/>
</dbReference>
<dbReference type="CCDS" id="CCDS4169.1">
    <molecule id="P36402-5"/>
</dbReference>
<dbReference type="CCDS" id="CCDS4170.1">
    <molecule id="P36402-6"/>
</dbReference>
<dbReference type="CCDS" id="CCDS43362.1">
    <molecule id="P36402-8"/>
</dbReference>
<dbReference type="CCDS" id="CCDS47263.2">
    <molecule id="P36402-2"/>
</dbReference>
<dbReference type="PIR" id="A38095">
    <property type="entry name" value="A38095"/>
</dbReference>
<dbReference type="PIR" id="B38095">
    <property type="entry name" value="B38095"/>
</dbReference>
<dbReference type="PIR" id="C38095">
    <property type="entry name" value="C38095"/>
</dbReference>
<dbReference type="PIR" id="D38095">
    <property type="entry name" value="D38095"/>
</dbReference>
<dbReference type="PIR" id="S61796">
    <property type="entry name" value="S61796"/>
</dbReference>
<dbReference type="RefSeq" id="NP_001128323.2">
    <molecule id="P36402-2"/>
    <property type="nucleotide sequence ID" value="NM_001134851.4"/>
</dbReference>
<dbReference type="RefSeq" id="NP_001333354.1">
    <property type="nucleotide sequence ID" value="NM_001346425.1"/>
</dbReference>
<dbReference type="RefSeq" id="NP_001333379.1">
    <property type="nucleotide sequence ID" value="NM_001346450.1"/>
</dbReference>
<dbReference type="RefSeq" id="NP_003193.2">
    <molecule id="P36402-5"/>
    <property type="nucleotide sequence ID" value="NM_003202.4"/>
</dbReference>
<dbReference type="RefSeq" id="NP_963963.1">
    <molecule id="P36402-6"/>
    <property type="nucleotide sequence ID" value="NM_201632.5"/>
</dbReference>
<dbReference type="RefSeq" id="NP_963965.1">
    <molecule id="P36402-8"/>
    <property type="nucleotide sequence ID" value="NM_201634.5"/>
</dbReference>
<dbReference type="RefSeq" id="NP_998813.1">
    <molecule id="P36402-6"/>
    <property type="nucleotide sequence ID" value="NM_213648.5"/>
</dbReference>
<dbReference type="RefSeq" id="XP_006714747.1">
    <molecule id="P36402-9"/>
    <property type="nucleotide sequence ID" value="XM_006714684.3"/>
</dbReference>
<dbReference type="RefSeq" id="XP_047273593.1">
    <molecule id="P36402-7"/>
    <property type="nucleotide sequence ID" value="XM_047417637.1"/>
</dbReference>
<dbReference type="RefSeq" id="XP_054209299.1">
    <molecule id="P36402-7"/>
    <property type="nucleotide sequence ID" value="XM_054353324.1"/>
</dbReference>
<dbReference type="RefSeq" id="XP_054209303.1">
    <molecule id="P36402-9"/>
    <property type="nucleotide sequence ID" value="XM_054353328.1"/>
</dbReference>
<dbReference type="SMR" id="P36402"/>
<dbReference type="BioGRID" id="112794">
    <property type="interactions" value="28"/>
</dbReference>
<dbReference type="FunCoup" id="P36402">
    <property type="interactions" value="1643"/>
</dbReference>
<dbReference type="IntAct" id="P36402">
    <property type="interactions" value="14"/>
</dbReference>
<dbReference type="MINT" id="P36402"/>
<dbReference type="STRING" id="9606.ENSP00000340347"/>
<dbReference type="GlyGen" id="P36402">
    <property type="glycosylation" value="1 site"/>
</dbReference>
<dbReference type="iPTMnet" id="P36402"/>
<dbReference type="PhosphoSitePlus" id="P36402"/>
<dbReference type="BioMuta" id="TCF7"/>
<dbReference type="DMDM" id="209572716"/>
<dbReference type="jPOST" id="P36402"/>
<dbReference type="MassIVE" id="P36402"/>
<dbReference type="PaxDb" id="9606-ENSP00000340347"/>
<dbReference type="PeptideAtlas" id="P36402"/>
<dbReference type="ProteomicsDB" id="55182">
    <molecule id="P36402-1"/>
</dbReference>
<dbReference type="ProteomicsDB" id="55183">
    <molecule id="P36402-10"/>
</dbReference>
<dbReference type="ProteomicsDB" id="55186">
    <molecule id="P36402-13"/>
</dbReference>
<dbReference type="ProteomicsDB" id="55187">
    <molecule id="P36402-14"/>
</dbReference>
<dbReference type="ProteomicsDB" id="55188">
    <molecule id="P36402-15"/>
</dbReference>
<dbReference type="ProteomicsDB" id="55189">
    <molecule id="P36402-16"/>
</dbReference>
<dbReference type="ProteomicsDB" id="55190">
    <molecule id="P36402-2"/>
</dbReference>
<dbReference type="ProteomicsDB" id="55191">
    <molecule id="P36402-3"/>
</dbReference>
<dbReference type="ProteomicsDB" id="55193">
    <molecule id="P36402-5"/>
</dbReference>
<dbReference type="ProteomicsDB" id="55194">
    <molecule id="P36402-6"/>
</dbReference>
<dbReference type="ProteomicsDB" id="55195">
    <molecule id="P36402-7"/>
</dbReference>
<dbReference type="ProteomicsDB" id="55196">
    <molecule id="P36402-8"/>
</dbReference>
<dbReference type="ProteomicsDB" id="55197">
    <molecule id="P36402-9"/>
</dbReference>
<dbReference type="Pumba" id="P36402"/>
<dbReference type="Antibodypedia" id="14629">
    <property type="antibodies" value="485 antibodies from 36 providers"/>
</dbReference>
<dbReference type="DNASU" id="6932"/>
<dbReference type="Ensembl" id="ENST00000342854.10">
    <molecule id="P36402-5"/>
    <property type="protein sequence ID" value="ENSP00000340347.5"/>
    <property type="gene ID" value="ENSG00000081059.20"/>
</dbReference>
<dbReference type="Ensembl" id="ENST00000378560.8">
    <molecule id="P36402-8"/>
    <property type="protein sequence ID" value="ENSP00000367822.4"/>
    <property type="gene ID" value="ENSG00000081059.20"/>
</dbReference>
<dbReference type="Ensembl" id="ENST00000395023.5">
    <molecule id="P36402-6"/>
    <property type="protein sequence ID" value="ENSP00000378469.1"/>
    <property type="gene ID" value="ENSG00000081059.20"/>
</dbReference>
<dbReference type="Ensembl" id="ENST00000518915.5">
    <molecule id="P36402-2"/>
    <property type="protein sequence ID" value="ENSP00000430179.1"/>
    <property type="gene ID" value="ENSG00000081059.20"/>
</dbReference>
<dbReference type="Ensembl" id="ENST00000520958.5">
    <molecule id="P36402-6"/>
    <property type="protein sequence ID" value="ENSP00000429547.1"/>
    <property type="gene ID" value="ENSG00000081059.20"/>
</dbReference>
<dbReference type="GeneID" id="6932"/>
<dbReference type="KEGG" id="hsa:6932"/>
<dbReference type="MANE-Select" id="ENST00000342854.10">
    <molecule id="P36402-5"/>
    <property type="protein sequence ID" value="ENSP00000340347.5"/>
    <property type="RefSeq nucleotide sequence ID" value="NM_003202.5"/>
    <property type="RefSeq protein sequence ID" value="NP_003193.2"/>
</dbReference>
<dbReference type="UCSC" id="uc003kyt.4">
    <molecule id="P36402-1"/>
    <property type="organism name" value="human"/>
</dbReference>
<dbReference type="AGR" id="HGNC:11639"/>
<dbReference type="CTD" id="6932"/>
<dbReference type="DisGeNET" id="6932"/>
<dbReference type="GeneCards" id="TCF7"/>
<dbReference type="HGNC" id="HGNC:11639">
    <property type="gene designation" value="TCF7"/>
</dbReference>
<dbReference type="HPA" id="ENSG00000081059">
    <property type="expression patterns" value="Tissue enriched (lymphoid)"/>
</dbReference>
<dbReference type="MIM" id="189908">
    <property type="type" value="gene"/>
</dbReference>
<dbReference type="neXtProt" id="NX_P36402"/>
<dbReference type="OpenTargets" id="ENSG00000081059"/>
<dbReference type="PharmGKB" id="PA36392"/>
<dbReference type="VEuPathDB" id="HostDB:ENSG00000081059"/>
<dbReference type="eggNOG" id="KOG3248">
    <property type="taxonomic scope" value="Eukaryota"/>
</dbReference>
<dbReference type="GeneTree" id="ENSGT00940000159831"/>
<dbReference type="HOGENOM" id="CLU_013229_5_0_1"/>
<dbReference type="InParanoid" id="P36402"/>
<dbReference type="OMA" id="GEGRCPN"/>
<dbReference type="OrthoDB" id="2307332at2759"/>
<dbReference type="PAN-GO" id="P36402">
    <property type="GO annotations" value="5 GO annotations based on evolutionary models"/>
</dbReference>
<dbReference type="PhylomeDB" id="P36402"/>
<dbReference type="TreeFam" id="TF318448"/>
<dbReference type="PathwayCommons" id="P36402"/>
<dbReference type="Reactome" id="R-HSA-201722">
    <property type="pathway name" value="Formation of the beta-catenin:TCF transactivating complex"/>
</dbReference>
<dbReference type="Reactome" id="R-HSA-3769402">
    <property type="pathway name" value="Deactivation of the beta-catenin transactivating complex"/>
</dbReference>
<dbReference type="Reactome" id="R-HSA-4086398">
    <property type="pathway name" value="Ca2+ pathway"/>
</dbReference>
<dbReference type="Reactome" id="R-HSA-4411364">
    <property type="pathway name" value="Binding of TCF/LEF:CTNNB1 to target gene promoters"/>
</dbReference>
<dbReference type="Reactome" id="R-HSA-4641265">
    <property type="pathway name" value="Repression of WNT target genes"/>
</dbReference>
<dbReference type="Reactome" id="R-HSA-8951430">
    <property type="pathway name" value="RUNX3 regulates WNT signaling"/>
</dbReference>
<dbReference type="Reactome" id="R-HSA-9754189">
    <property type="pathway name" value="Germ layer formation at gastrulation"/>
</dbReference>
<dbReference type="Reactome" id="R-HSA-9796292">
    <property type="pathway name" value="Formation of axial mesoderm"/>
</dbReference>
<dbReference type="Reactome" id="R-HSA-9825892">
    <property type="pathway name" value="Regulation of MITF-M-dependent genes involved in cell cycle and proliferation"/>
</dbReference>
<dbReference type="SignaLink" id="P36402"/>
<dbReference type="SIGNOR" id="P36402"/>
<dbReference type="BioGRID-ORCS" id="6932">
    <property type="hits" value="19 hits in 1179 CRISPR screens"/>
</dbReference>
<dbReference type="ChiTaRS" id="TCF7">
    <property type="organism name" value="human"/>
</dbReference>
<dbReference type="GeneWiki" id="TCF7"/>
<dbReference type="GenomeRNAi" id="6932"/>
<dbReference type="Pharos" id="P36402">
    <property type="development level" value="Tbio"/>
</dbReference>
<dbReference type="PRO" id="PR:P36402"/>
<dbReference type="Proteomes" id="UP000005640">
    <property type="component" value="Chromosome 5"/>
</dbReference>
<dbReference type="RNAct" id="P36402">
    <property type="molecule type" value="protein"/>
</dbReference>
<dbReference type="Bgee" id="ENSG00000081059">
    <property type="expression patterns" value="Expressed in thymus and 207 other cell types or tissues"/>
</dbReference>
<dbReference type="ExpressionAtlas" id="P36402">
    <property type="expression patterns" value="baseline and differential"/>
</dbReference>
<dbReference type="GO" id="GO:1990907">
    <property type="term" value="C:beta-catenin-TCF complex"/>
    <property type="evidence" value="ECO:0000318"/>
    <property type="project" value="GO_Central"/>
</dbReference>
<dbReference type="GO" id="GO:0000785">
    <property type="term" value="C:chromatin"/>
    <property type="evidence" value="ECO:0000318"/>
    <property type="project" value="GO_Central"/>
</dbReference>
<dbReference type="GO" id="GO:0016604">
    <property type="term" value="C:nuclear body"/>
    <property type="evidence" value="ECO:0000314"/>
    <property type="project" value="HPA"/>
</dbReference>
<dbReference type="GO" id="GO:0005654">
    <property type="term" value="C:nucleoplasm"/>
    <property type="evidence" value="ECO:0000314"/>
    <property type="project" value="HPA"/>
</dbReference>
<dbReference type="GO" id="GO:0005634">
    <property type="term" value="C:nucleus"/>
    <property type="evidence" value="ECO:0000314"/>
    <property type="project" value="UniProtKB"/>
</dbReference>
<dbReference type="GO" id="GO:0008013">
    <property type="term" value="F:beta-catenin binding"/>
    <property type="evidence" value="ECO:0000314"/>
    <property type="project" value="BHF-UCL"/>
</dbReference>
<dbReference type="GO" id="GO:0000981">
    <property type="term" value="F:DNA-binding transcription factor activity, RNA polymerase II-specific"/>
    <property type="evidence" value="ECO:0000318"/>
    <property type="project" value="GO_Central"/>
</dbReference>
<dbReference type="GO" id="GO:0001217">
    <property type="term" value="F:DNA-binding transcription repressor activity"/>
    <property type="evidence" value="ECO:0000250"/>
    <property type="project" value="UniProtKB"/>
</dbReference>
<dbReference type="GO" id="GO:0000978">
    <property type="term" value="F:RNA polymerase II cis-regulatory region sequence-specific DNA binding"/>
    <property type="evidence" value="ECO:0000318"/>
    <property type="project" value="GO_Central"/>
</dbReference>
<dbReference type="GO" id="GO:1990837">
    <property type="term" value="F:sequence-specific double-stranded DNA binding"/>
    <property type="evidence" value="ECO:0000314"/>
    <property type="project" value="ARUK-UCL"/>
</dbReference>
<dbReference type="GO" id="GO:0000976">
    <property type="term" value="F:transcription cis-regulatory region binding"/>
    <property type="evidence" value="ECO:0000314"/>
    <property type="project" value="UniProtKB"/>
</dbReference>
<dbReference type="GO" id="GO:0060070">
    <property type="term" value="P:canonical Wnt signaling pathway"/>
    <property type="evidence" value="ECO:0000318"/>
    <property type="project" value="GO_Central"/>
</dbReference>
<dbReference type="GO" id="GO:0071353">
    <property type="term" value="P:cellular response to interleukin-4"/>
    <property type="evidence" value="ECO:0000314"/>
    <property type="project" value="UniProtKB"/>
</dbReference>
<dbReference type="GO" id="GO:0042492">
    <property type="term" value="P:gamma-delta T cell differentiation"/>
    <property type="evidence" value="ECO:0000250"/>
    <property type="project" value="UniProtKB"/>
</dbReference>
<dbReference type="GO" id="GO:0006955">
    <property type="term" value="P:immune response"/>
    <property type="evidence" value="ECO:0000304"/>
    <property type="project" value="ProtInc"/>
</dbReference>
<dbReference type="GO" id="GO:0006355">
    <property type="term" value="P:regulation of DNA-templated transcription"/>
    <property type="evidence" value="ECO:0000250"/>
    <property type="project" value="UniProtKB"/>
</dbReference>
<dbReference type="GO" id="GO:0045586">
    <property type="term" value="P:regulation of gamma-delta T cell differentiation"/>
    <property type="evidence" value="ECO:0000250"/>
    <property type="project" value="UniProtKB"/>
</dbReference>
<dbReference type="GO" id="GO:0006357">
    <property type="term" value="P:regulation of transcription by RNA polymerase II"/>
    <property type="evidence" value="ECO:0000318"/>
    <property type="project" value="GO_Central"/>
</dbReference>
<dbReference type="CDD" id="cd21996">
    <property type="entry name" value="HMG-box_TCF7-like"/>
    <property type="match status" value="1"/>
</dbReference>
<dbReference type="FunFam" id="4.10.900.10:FF:000009">
    <property type="entry name" value="transcription factor 7 isoform X1"/>
    <property type="match status" value="1"/>
</dbReference>
<dbReference type="FunFam" id="1.10.30.10:FF:000001">
    <property type="entry name" value="transcription factor 7 isoform X2"/>
    <property type="match status" value="1"/>
</dbReference>
<dbReference type="Gene3D" id="1.10.30.10">
    <property type="entry name" value="High mobility group box domain"/>
    <property type="match status" value="1"/>
</dbReference>
<dbReference type="Gene3D" id="4.10.900.10">
    <property type="entry name" value="TCF3-CBD (Catenin binding domain)"/>
    <property type="match status" value="1"/>
</dbReference>
<dbReference type="InterPro" id="IPR027397">
    <property type="entry name" value="Catenin-bd_sf"/>
</dbReference>
<dbReference type="InterPro" id="IPR013558">
    <property type="entry name" value="CTNNB1-bd_N"/>
</dbReference>
<dbReference type="InterPro" id="IPR009071">
    <property type="entry name" value="HMG_box_dom"/>
</dbReference>
<dbReference type="InterPro" id="IPR036910">
    <property type="entry name" value="HMG_box_dom_sf"/>
</dbReference>
<dbReference type="InterPro" id="IPR024940">
    <property type="entry name" value="TCF/LEF"/>
</dbReference>
<dbReference type="PANTHER" id="PTHR10373:SF33">
    <property type="entry name" value="TRANSCRIPTION FACTOR 7"/>
    <property type="match status" value="1"/>
</dbReference>
<dbReference type="PANTHER" id="PTHR10373">
    <property type="entry name" value="TRANSCRIPTION FACTOR 7 FAMILY MEMBER"/>
    <property type="match status" value="1"/>
</dbReference>
<dbReference type="Pfam" id="PF08347">
    <property type="entry name" value="CTNNB1_binding"/>
    <property type="match status" value="1"/>
</dbReference>
<dbReference type="Pfam" id="PF00505">
    <property type="entry name" value="HMG_box"/>
    <property type="match status" value="1"/>
</dbReference>
<dbReference type="SMART" id="SM00398">
    <property type="entry name" value="HMG"/>
    <property type="match status" value="1"/>
</dbReference>
<dbReference type="SUPFAM" id="SSF47095">
    <property type="entry name" value="HMG-box"/>
    <property type="match status" value="1"/>
</dbReference>
<dbReference type="PROSITE" id="PS50118">
    <property type="entry name" value="HMG_BOX_2"/>
    <property type="match status" value="1"/>
</dbReference>
<accession>P36402</accession>
<accession>B3KSH3</accession>
<accession>Q86WR9</accession>
<accession>Q9UKI4</accession>
<name>TCF7_HUMAN</name>
<proteinExistence type="evidence at protein level"/>
<protein>
    <recommendedName>
        <fullName>Transcription factor 7</fullName>
        <shortName>TCF-7</shortName>
    </recommendedName>
    <alternativeName>
        <fullName evidence="18">T-cell-specific transcription factor 1</fullName>
        <shortName>T-cell factor 1</shortName>
        <shortName evidence="14 15">TCF-1</shortName>
    </alternativeName>
</protein>
<organism>
    <name type="scientific">Homo sapiens</name>
    <name type="common">Human</name>
    <dbReference type="NCBI Taxonomy" id="9606"/>
    <lineage>
        <taxon>Eukaryota</taxon>
        <taxon>Metazoa</taxon>
        <taxon>Chordata</taxon>
        <taxon>Craniata</taxon>
        <taxon>Vertebrata</taxon>
        <taxon>Euteleostomi</taxon>
        <taxon>Mammalia</taxon>
        <taxon>Eutheria</taxon>
        <taxon>Euarchontoglires</taxon>
        <taxon>Primates</taxon>
        <taxon>Haplorrhini</taxon>
        <taxon>Catarrhini</taxon>
        <taxon>Hominidae</taxon>
        <taxon>Homo</taxon>
    </lineage>
</organism>
<reference key="1">
    <citation type="journal article" date="1991" name="EMBO J.">
        <title>Identification and cloning of TCF-1, a T lymphocyte-specific transcription factor containing a sequence-specific HMG box.</title>
        <authorList>
            <person name="van de Wetering M."/>
            <person name="Oosterwegel M.A."/>
            <person name="Dooijes D."/>
            <person name="Clevers H."/>
        </authorList>
    </citation>
    <scope>NUCLEOTIDE SEQUENCE [MRNA] (ISOFORMS 4S; 2S AND 3S)</scope>
    <source>
        <tissue>T-cell</tissue>
    </source>
</reference>
<reference key="2">
    <citation type="journal article" date="1992" name="J. Biol. Chem.">
        <title>The human T cell transcription factor-1 gene. Structure, localization, and promoter characterization.</title>
        <authorList>
            <person name="van de Wetering M."/>
            <person name="Oosterwegel M.A."/>
            <person name="Holstege F."/>
            <person name="Dooyes D."/>
            <person name="Suijkerbuijk R."/>
            <person name="Geurts van Kessel A."/>
            <person name="Clevers H."/>
        </authorList>
    </citation>
    <scope>NUCLEOTIDE SEQUENCE [GENOMIC DNA] (ISOFORMS 4S; 2S; 3S AND 5S)</scope>
    <source>
        <tissue>T-cell</tissue>
    </source>
</reference>
<reference key="3">
    <citation type="journal article" date="1995" name="Biochim. Biophys. Acta">
        <title>The human high mobility group (HMG)-box transcription factor TCF-1: novel isoforms due to alternative splicing and usage of a new exon IXA.</title>
        <authorList>
            <person name="Mayer K."/>
            <person name="Wolff E."/>
            <person name="Clevers H."/>
            <person name="Ballhausen W.G."/>
        </authorList>
    </citation>
    <scope>NUCLEOTIDE SEQUENCE [MRNA] (ISOFORMS 1S; 5S; 7S AND 8S)</scope>
    <source>
        <tissue>T-cell lymphoma</tissue>
    </source>
</reference>
<reference key="4">
    <citation type="journal article" date="2004" name="Nat. Genet.">
        <title>Complete sequencing and characterization of 21,243 full-length human cDNAs.</title>
        <authorList>
            <person name="Ota T."/>
            <person name="Suzuki Y."/>
            <person name="Nishikawa T."/>
            <person name="Otsuki T."/>
            <person name="Sugiyama T."/>
            <person name="Irie R."/>
            <person name="Wakamatsu A."/>
            <person name="Hayashi K."/>
            <person name="Sato H."/>
            <person name="Nagai K."/>
            <person name="Kimura K."/>
            <person name="Makita H."/>
            <person name="Sekine M."/>
            <person name="Obayashi M."/>
            <person name="Nishi T."/>
            <person name="Shibahara T."/>
            <person name="Tanaka T."/>
            <person name="Ishii S."/>
            <person name="Yamamoto J."/>
            <person name="Saito K."/>
            <person name="Kawai Y."/>
            <person name="Isono Y."/>
            <person name="Nakamura Y."/>
            <person name="Nagahari K."/>
            <person name="Murakami K."/>
            <person name="Yasuda T."/>
            <person name="Iwayanagi T."/>
            <person name="Wagatsuma M."/>
            <person name="Shiratori A."/>
            <person name="Sudo H."/>
            <person name="Hosoiri T."/>
            <person name="Kaku Y."/>
            <person name="Kodaira H."/>
            <person name="Kondo H."/>
            <person name="Sugawara M."/>
            <person name="Takahashi M."/>
            <person name="Kanda K."/>
            <person name="Yokoi T."/>
            <person name="Furuya T."/>
            <person name="Kikkawa E."/>
            <person name="Omura Y."/>
            <person name="Abe K."/>
            <person name="Kamihara K."/>
            <person name="Katsuta N."/>
            <person name="Sato K."/>
            <person name="Tanikawa M."/>
            <person name="Yamazaki M."/>
            <person name="Ninomiya K."/>
            <person name="Ishibashi T."/>
            <person name="Yamashita H."/>
            <person name="Murakawa K."/>
            <person name="Fujimori K."/>
            <person name="Tanai H."/>
            <person name="Kimata M."/>
            <person name="Watanabe M."/>
            <person name="Hiraoka S."/>
            <person name="Chiba Y."/>
            <person name="Ishida S."/>
            <person name="Ono Y."/>
            <person name="Takiguchi S."/>
            <person name="Watanabe S."/>
            <person name="Yosida M."/>
            <person name="Hotuta T."/>
            <person name="Kusano J."/>
            <person name="Kanehori K."/>
            <person name="Takahashi-Fujii A."/>
            <person name="Hara H."/>
            <person name="Tanase T.-O."/>
            <person name="Nomura Y."/>
            <person name="Togiya S."/>
            <person name="Komai F."/>
            <person name="Hara R."/>
            <person name="Takeuchi K."/>
            <person name="Arita M."/>
            <person name="Imose N."/>
            <person name="Musashino K."/>
            <person name="Yuuki H."/>
            <person name="Oshima A."/>
            <person name="Sasaki N."/>
            <person name="Aotsuka S."/>
            <person name="Yoshikawa Y."/>
            <person name="Matsunawa H."/>
            <person name="Ichihara T."/>
            <person name="Shiohata N."/>
            <person name="Sano S."/>
            <person name="Moriya S."/>
            <person name="Momiyama H."/>
            <person name="Satoh N."/>
            <person name="Takami S."/>
            <person name="Terashima Y."/>
            <person name="Suzuki O."/>
            <person name="Nakagawa S."/>
            <person name="Senoh A."/>
            <person name="Mizoguchi H."/>
            <person name="Goto Y."/>
            <person name="Shimizu F."/>
            <person name="Wakebe H."/>
            <person name="Hishigaki H."/>
            <person name="Watanabe T."/>
            <person name="Sugiyama A."/>
            <person name="Takemoto M."/>
            <person name="Kawakami B."/>
            <person name="Yamazaki M."/>
            <person name="Watanabe K."/>
            <person name="Kumagai A."/>
            <person name="Itakura S."/>
            <person name="Fukuzumi Y."/>
            <person name="Fujimori Y."/>
            <person name="Komiyama M."/>
            <person name="Tashiro H."/>
            <person name="Tanigami A."/>
            <person name="Fujiwara T."/>
            <person name="Ono T."/>
            <person name="Yamada K."/>
            <person name="Fujii Y."/>
            <person name="Ozaki K."/>
            <person name="Hirao M."/>
            <person name="Ohmori Y."/>
            <person name="Kawabata A."/>
            <person name="Hikiji T."/>
            <person name="Kobatake N."/>
            <person name="Inagaki H."/>
            <person name="Ikema Y."/>
            <person name="Okamoto S."/>
            <person name="Okitani R."/>
            <person name="Kawakami T."/>
            <person name="Noguchi S."/>
            <person name="Itoh T."/>
            <person name="Shigeta K."/>
            <person name="Senba T."/>
            <person name="Matsumura K."/>
            <person name="Nakajima Y."/>
            <person name="Mizuno T."/>
            <person name="Morinaga M."/>
            <person name="Sasaki M."/>
            <person name="Togashi T."/>
            <person name="Oyama M."/>
            <person name="Hata H."/>
            <person name="Watanabe M."/>
            <person name="Komatsu T."/>
            <person name="Mizushima-Sugano J."/>
            <person name="Satoh T."/>
            <person name="Shirai Y."/>
            <person name="Takahashi Y."/>
            <person name="Nakagawa K."/>
            <person name="Okumura K."/>
            <person name="Nagase T."/>
            <person name="Nomura N."/>
            <person name="Kikuchi H."/>
            <person name="Masuho Y."/>
            <person name="Yamashita R."/>
            <person name="Nakai K."/>
            <person name="Yada T."/>
            <person name="Nakamura Y."/>
            <person name="Ohara O."/>
            <person name="Isogai T."/>
            <person name="Sugano S."/>
        </authorList>
    </citation>
    <scope>NUCLEOTIDE SEQUENCE [LARGE SCALE MRNA] (ISOFORM 2S)</scope>
    <source>
        <tissue>Thymus</tissue>
    </source>
</reference>
<reference key="5">
    <citation type="journal article" date="2004" name="Nature">
        <title>The DNA sequence and comparative analysis of human chromosome 5.</title>
        <authorList>
            <person name="Schmutz J."/>
            <person name="Martin J."/>
            <person name="Terry A."/>
            <person name="Couronne O."/>
            <person name="Grimwood J."/>
            <person name="Lowry S."/>
            <person name="Gordon L.A."/>
            <person name="Scott D."/>
            <person name="Xie G."/>
            <person name="Huang W."/>
            <person name="Hellsten U."/>
            <person name="Tran-Gyamfi M."/>
            <person name="She X."/>
            <person name="Prabhakar S."/>
            <person name="Aerts A."/>
            <person name="Altherr M."/>
            <person name="Bajorek E."/>
            <person name="Black S."/>
            <person name="Branscomb E."/>
            <person name="Caoile C."/>
            <person name="Challacombe J.F."/>
            <person name="Chan Y.M."/>
            <person name="Denys M."/>
            <person name="Detter J.C."/>
            <person name="Escobar J."/>
            <person name="Flowers D."/>
            <person name="Fotopulos D."/>
            <person name="Glavina T."/>
            <person name="Gomez M."/>
            <person name="Gonzales E."/>
            <person name="Goodstein D."/>
            <person name="Grigoriev I."/>
            <person name="Groza M."/>
            <person name="Hammon N."/>
            <person name="Hawkins T."/>
            <person name="Haydu L."/>
            <person name="Israni S."/>
            <person name="Jett J."/>
            <person name="Kadner K."/>
            <person name="Kimball H."/>
            <person name="Kobayashi A."/>
            <person name="Lopez F."/>
            <person name="Lou Y."/>
            <person name="Martinez D."/>
            <person name="Medina C."/>
            <person name="Morgan J."/>
            <person name="Nandkeshwar R."/>
            <person name="Noonan J.P."/>
            <person name="Pitluck S."/>
            <person name="Pollard M."/>
            <person name="Predki P."/>
            <person name="Priest J."/>
            <person name="Ramirez L."/>
            <person name="Retterer J."/>
            <person name="Rodriguez A."/>
            <person name="Rogers S."/>
            <person name="Salamov A."/>
            <person name="Salazar A."/>
            <person name="Thayer N."/>
            <person name="Tice H."/>
            <person name="Tsai M."/>
            <person name="Ustaszewska A."/>
            <person name="Vo N."/>
            <person name="Wheeler J."/>
            <person name="Wu K."/>
            <person name="Yang J."/>
            <person name="Dickson M."/>
            <person name="Cheng J.-F."/>
            <person name="Eichler E.E."/>
            <person name="Olsen A."/>
            <person name="Pennacchio L.A."/>
            <person name="Rokhsar D.S."/>
            <person name="Richardson P."/>
            <person name="Lucas S.M."/>
            <person name="Myers R.M."/>
            <person name="Rubin E.M."/>
        </authorList>
    </citation>
    <scope>NUCLEOTIDE SEQUENCE [LARGE SCALE GENOMIC DNA]</scope>
</reference>
<reference key="6">
    <citation type="submission" date="2005-09" db="EMBL/GenBank/DDBJ databases">
        <authorList>
            <person name="Mural R.J."/>
            <person name="Istrail S."/>
            <person name="Sutton G.G."/>
            <person name="Florea L."/>
            <person name="Halpern A.L."/>
            <person name="Mobarry C.M."/>
            <person name="Lippert R."/>
            <person name="Walenz B."/>
            <person name="Shatkay H."/>
            <person name="Dew I."/>
            <person name="Miller J.R."/>
            <person name="Flanigan M.J."/>
            <person name="Edwards N.J."/>
            <person name="Bolanos R."/>
            <person name="Fasulo D."/>
            <person name="Halldorsson B.V."/>
            <person name="Hannenhalli S."/>
            <person name="Turner R."/>
            <person name="Yooseph S."/>
            <person name="Lu F."/>
            <person name="Nusskern D.R."/>
            <person name="Shue B.C."/>
            <person name="Zheng X.H."/>
            <person name="Zhong F."/>
            <person name="Delcher A.L."/>
            <person name="Huson D.H."/>
            <person name="Kravitz S.A."/>
            <person name="Mouchard L."/>
            <person name="Reinert K."/>
            <person name="Remington K.A."/>
            <person name="Clark A.G."/>
            <person name="Waterman M.S."/>
            <person name="Eichler E.E."/>
            <person name="Adams M.D."/>
            <person name="Hunkapiller M.W."/>
            <person name="Myers E.W."/>
            <person name="Venter J.C."/>
        </authorList>
    </citation>
    <scope>NUCLEOTIDE SEQUENCE [LARGE SCALE GENOMIC DNA]</scope>
</reference>
<reference key="7">
    <citation type="journal article" date="2004" name="Genome Res.">
        <title>The status, quality, and expansion of the NIH full-length cDNA project: the Mammalian Gene Collection (MGC).</title>
        <authorList>
            <consortium name="The MGC Project Team"/>
        </authorList>
    </citation>
    <scope>NUCLEOTIDE SEQUENCE [LARGE SCALE MRNA] (ISOFORM 2L)</scope>
    <source>
        <tissue>Liver</tissue>
        <tissue>Skin</tissue>
    </source>
</reference>
<reference key="8">
    <citation type="journal article" date="1999" name="Science">
        <title>Synergy between tumor suppressor APC and the beta-catenin-Tcf4 target Tcf1.</title>
        <authorList>
            <person name="Roose J."/>
            <person name="Huls G."/>
            <person name="van Beest M."/>
            <person name="Moerer P."/>
            <person name="van der Horn K."/>
            <person name="Goldschmeding R."/>
            <person name="Logtenberg T."/>
            <person name="Clevers H."/>
        </authorList>
    </citation>
    <scope>NUCLEOTIDE SEQUENCE [GENOMIC DNA] OF 1-68 (ISOFORMS 1L/2L/3L/4L/5L/7L/8L)</scope>
    <scope>TISSUE SPECIFICITY</scope>
    <scope>INDUCTION BY TCF7L2 AND CTNNB1</scope>
</reference>
<reference key="9">
    <citation type="journal article" date="1996" name="Mol. Cell. Biol.">
        <title>Extensive alternative splicing and dual promoter usage generate Tcf-1 protein isoforms with differential transcription control properties.</title>
        <authorList>
            <person name="Van de Wetering M."/>
            <person name="Castrop J."/>
            <person name="Korinek V."/>
            <person name="Clevers H."/>
        </authorList>
    </citation>
    <scope>UTILIZATION OF AN UPSTREAM PROMOTER</scope>
    <scope>ALTERNATIVE SPLICING</scope>
</reference>
<reference key="10">
    <citation type="journal article" date="1998" name="Mol. Cell. Biol.">
        <title>Two members of the Tcf family implicated in Wnt/b-catenin signaling during embryogenesis in the mouse.</title>
        <authorList>
            <person name="Korinek V."/>
            <person name="Barker N."/>
            <person name="Willert K."/>
            <person name="Molenaar M."/>
            <person name="Roose J."/>
            <person name="Wagenaar G."/>
            <person name="Markman M."/>
            <person name="Lamers W."/>
            <person name="Destree O."/>
            <person name="Clevers H."/>
        </authorList>
    </citation>
    <scope>INTERACTION WITH CTNNB1</scope>
</reference>
<reference key="11">
    <citation type="journal article" date="1998" name="Nature">
        <title>The Xenopus Wnt effector XTcf-3 interacts with Groucho-related transcriptional repressors.</title>
        <authorList>
            <person name="Roose J."/>
            <person name="Molenaar M."/>
            <person name="Peterson J."/>
            <person name="Hurenkamp J."/>
            <person name="Brantjes H."/>
            <person name="Moerer P."/>
            <person name="van de Wetering M."/>
            <person name="Destree O."/>
            <person name="Clevers H."/>
        </authorList>
    </citation>
    <scope>INTERACTION WITH CTNNB1; TLE5 AND TLE4</scope>
</reference>
<reference key="12">
    <citation type="journal article" date="2001" name="Nucleic Acids Res.">
        <title>All Tcf HMG box transcription factors interact with Groucho-related co-repressors.</title>
        <authorList>
            <person name="Brantjes H."/>
            <person name="Roose J."/>
            <person name="van De Wetering M."/>
            <person name="Clevers H."/>
        </authorList>
    </citation>
    <scope>INTERACTION WITH TLE5; TLE1; TLE2; TLE3 AND TLE4</scope>
</reference>
<reference key="13">
    <citation type="journal article" date="2007" name="Science">
        <title>Regulation of gammadelta versus alphabeta T lymphocyte differentiation by the transcription factor SOX13.</title>
        <authorList>
            <person name="Melichar H.J."/>
            <person name="Narayan K."/>
            <person name="Der S.D."/>
            <person name="Hiraoka Y."/>
            <person name="Gardiol N."/>
            <person name="Jeannet G."/>
            <person name="Held W."/>
            <person name="Chambers C.A."/>
            <person name="Kang J."/>
        </authorList>
    </citation>
    <scope>INTERACTION WITH SOX13</scope>
</reference>
<reference key="14">
    <citation type="journal article" date="2009" name="Nucleic Acids Res.">
        <title>Dazap2 modulates transcription driven by the Wnt effector TCF-4.</title>
        <authorList>
            <person name="Lukas J."/>
            <person name="Mazna P."/>
            <person name="Valenta T."/>
            <person name="Doubravska L."/>
            <person name="Pospichalova V."/>
            <person name="Vojtechova M."/>
            <person name="Fafilek B."/>
            <person name="Ivanek R."/>
            <person name="Plachy J."/>
            <person name="Novak J."/>
            <person name="Korinek V."/>
        </authorList>
    </citation>
    <scope>INTERACTION WITH DAZAP2</scope>
</reference>
<reference key="15">
    <citation type="journal article" date="2010" name="J. Biol. Chem.">
        <title>Interaction between Hhex and SOX13 modulates Wnt/TCF activity.</title>
        <authorList>
            <person name="Marfil V."/>
            <person name="Moya M."/>
            <person name="Pierreux C.E."/>
            <person name="Castell J.V."/>
            <person name="Lemaigre F.P."/>
            <person name="Real F.X."/>
            <person name="Bort R."/>
        </authorList>
    </citation>
    <scope>INTERACTION WITH SOX13</scope>
</reference>
<reference key="16">
    <citation type="journal article" date="2015" name="Oncotarget">
        <title>AF1q is a novel TCF7 co-factor which activates CD44 and promotes breast cancer metastasis.</title>
        <authorList>
            <person name="Park J."/>
            <person name="Schlederer M."/>
            <person name="Schreiber M."/>
            <person name="Ice R."/>
            <person name="Merkel O."/>
            <person name="Bilban M."/>
            <person name="Hofbauer S."/>
            <person name="Kim S."/>
            <person name="Addison J."/>
            <person name="Zou J."/>
            <person name="Ji C."/>
            <person name="Bunting S.T."/>
            <person name="Wang Z."/>
            <person name="Shoham M."/>
            <person name="Huang G."/>
            <person name="Bago-Horvath Z."/>
            <person name="Gibson L.F."/>
            <person name="Rojanasakul Y."/>
            <person name="Remick S."/>
            <person name="Ivanov A."/>
            <person name="Pugacheva E."/>
            <person name="Bunting K.D."/>
            <person name="Moriggl R."/>
            <person name="Kenner L."/>
            <person name="Tse W."/>
        </authorList>
    </citation>
    <scope>INTERACTION WITH MLLT11</scope>
</reference>
<evidence type="ECO:0000250" key="1">
    <source>
        <dbReference type="UniProtKB" id="Q00417"/>
    </source>
</evidence>
<evidence type="ECO:0000255" key="2"/>
<evidence type="ECO:0000255" key="3">
    <source>
        <dbReference type="PROSITE-ProRule" id="PRU00267"/>
    </source>
</evidence>
<evidence type="ECO:0000256" key="4">
    <source>
        <dbReference type="SAM" id="MobiDB-lite"/>
    </source>
</evidence>
<evidence type="ECO:0000269" key="5">
    <source>
    </source>
</evidence>
<evidence type="ECO:0000269" key="6">
    <source>
    </source>
</evidence>
<evidence type="ECO:0000269" key="7">
    <source>
    </source>
</evidence>
<evidence type="ECO:0000269" key="8">
    <source>
    </source>
</evidence>
<evidence type="ECO:0000269" key="9">
    <source>
    </source>
</evidence>
<evidence type="ECO:0000269" key="10">
    <source>
    </source>
</evidence>
<evidence type="ECO:0000269" key="11">
    <source>
    </source>
</evidence>
<evidence type="ECO:0000269" key="12">
    <source>
    </source>
</evidence>
<evidence type="ECO:0000303" key="13">
    <source>
    </source>
</evidence>
<evidence type="ECO:0000303" key="14">
    <source>
    </source>
</evidence>
<evidence type="ECO:0000303" key="15">
    <source>
    </source>
</evidence>
<evidence type="ECO:0000303" key="16">
    <source>
    </source>
</evidence>
<evidence type="ECO:0000305" key="17"/>
<evidence type="ECO:0000305" key="18">
    <source>
    </source>
</evidence>
<evidence type="ECO:0000305" key="19">
    <source>
    </source>
</evidence>
<evidence type="ECO:0000312" key="20">
    <source>
        <dbReference type="HGNC" id="HGNC:11639"/>
    </source>
</evidence>
<gene>
    <name evidence="20" type="primary">TCF7</name>
    <name type="synonym">TCF1</name>
</gene>
<comment type="function">
    <text evidence="1">Transcriptional activator involved in T-cell lymphocyte differentiation. Necessary for the survival of CD4(+) CD8(+) immature thymocytes. Isoforms lacking the N-terminal CTNNB1 binding domain cannot fulfill this role. Binds to the T-lymphocyte-specific enhancer element (5'-WWCAAAG-3') found in the promoter of the CD3E gene. Represses expression of the T-cell receptor gamma gene in alpha-beta T-cell lineages (By similarity). Required for the development of natural killer receptor-positive lymphoid tissue inducer T-cells (By similarity). TLE1, TLE2, TLE3 and TLE4 repress transactivation mediated by TCF7 and CTNNB1. May also act as feedback transcriptional repressor of CTNNB1 and TCF7L2 target genes.</text>
</comment>
<comment type="subunit">
    <text evidence="6 7 8 9 10 11 12">Binds the armadillo repeat of CTNNB1 and forms a stable complex (PubMed:9488439, PubMed:9783587). Interacts with TLE5, TLE1, TLE2, TLE3 and TLE4 (PubMed:11266540, PubMed:9783587). Interacts with MLLT11 (PubMed:26079538). Long isoform interacts (via N-terminus) with SOX13; inhibits WNT-mediated transcriptional activity (PubMed:17218525, PubMed:20028982). Interacts with DAZAP2 (PubMed:19304756).</text>
</comment>
<comment type="interaction">
    <interactant intactId="EBI-2119465">
        <id>P36402</id>
    </interactant>
    <interactant intactId="EBI-491549">
        <id>P35222</id>
        <label>CTNNB1</label>
    </interactant>
    <organismsDiffer>false</organismsDiffer>
    <experiments>4</experiments>
</comment>
<comment type="interaction">
    <interactant intactId="EBI-2119465">
        <id>P36402</id>
    </interactant>
    <interactant intactId="EBI-6269719">
        <id>Q13015</id>
        <label>MLLT11</label>
    </interactant>
    <organismsDiffer>false</organismsDiffer>
    <experiments>2</experiments>
</comment>
<comment type="subcellular location">
    <subcellularLocation>
        <location>Nucleus</location>
    </subcellularLocation>
</comment>
<comment type="alternative products">
    <event type="alternative promoter"/>
    <event type="alternative splicing"/>
    <isoform>
        <id>P36402-5</id>
        <name evidence="19">2L</name>
        <sequence type="displayed"/>
    </isoform>
    <isoform>
        <id>P36402-1</id>
        <name evidence="19">4L</name>
        <name>D</name>
        <sequence type="described" ref="VSP_062571"/>
    </isoform>
    <isoform>
        <id>P36402-2</id>
        <name>4S</name>
        <name evidence="14">TCF-1A</name>
        <sequence type="described" ref="VSP_062568 VSP_062571"/>
    </isoform>
    <isoform>
        <id>P36402-3</id>
        <name evidence="19">1L</name>
        <sequence type="described" ref="VSP_062572"/>
    </isoform>
    <isoform>
        <id>P36402-9</id>
        <name evidence="19">5L</name>
        <name>D</name>
        <sequence type="described" ref="VSP_062575 VSP_062576"/>
    </isoform>
    <isoform>
        <id>P36402-10</id>
        <name>5S</name>
        <name evidence="13 15">TCF-1D</name>
        <sequence type="described" ref="VSP_062568 VSP_062575 VSP_062576"/>
    </isoform>
    <isoform>
        <id>P36402-13</id>
        <name evidence="19">7L</name>
        <name>F</name>
        <sequence type="described" ref="VSP_062574 VSP_062577"/>
    </isoform>
    <isoform>
        <id>P36402-14</id>
        <name>7S</name>
        <name evidence="15">TCF-1F</name>
        <sequence type="described" ref="VSP_062568 VSP_062574 VSP_062577"/>
    </isoform>
    <isoform>
        <id>P36402-15</id>
        <name evidence="19">8L</name>
        <name>G</name>
        <sequence type="described" ref="VSP_062573 VSP_062578"/>
    </isoform>
    <isoform>
        <id>P36402-16</id>
        <name>8S</name>
        <name evidence="15">TCF-1G</name>
        <sequence type="described" ref="VSP_062568 VSP_062573 VSP_062578"/>
    </isoform>
    <isoform>
        <id>P36402-6</id>
        <name>2S</name>
        <name>B</name>
        <name evidence="14">TCF-1B</name>
        <sequence type="described" ref="VSP_062568"/>
    </isoform>
    <isoform>
        <id>P36402-7</id>
        <name evidence="19">3L</name>
        <sequence type="described" ref="VSP_062570"/>
    </isoform>
    <isoform>
        <id>P36402-8</id>
        <name>3S</name>
        <name>C</name>
        <name evidence="14">TCF-1C</name>
        <sequence type="described" ref="VSP_062568 VSP_062570"/>
    </isoform>
    <isoform>
        <id>P36402-17</id>
        <name>1S</name>
        <name evidence="15">TCF-1E</name>
        <sequence type="described" ref="VSP_062568 VSP_062572"/>
    </isoform>
    <isoform>
        <id>P36402-18</id>
        <name evidence="19">18</name>
        <sequence type="described" ref="VSP_062569"/>
    </isoform>
    <text>2 series of isoforms, L and S, are produced by alternative promoter usage. Additional isoforms seem to exist.</text>
</comment>
<comment type="tissue specificity">
    <text evidence="5">Predominantly expressed in T-cells. Also detected in proliferating intestinal epithelial cells and in the basal epithelial cells of mammary gland epithelium.</text>
</comment>
<comment type="induction">
    <text evidence="5">By TCF7L2 and CTNNB1.</text>
</comment>
<comment type="similarity">
    <text evidence="17">Belongs to the TCF/LEF family.</text>
</comment>
<comment type="sequence caution" evidence="17">
    <conflict type="frameshift">
        <sequence resource="EMBL-CDS" id="CAA87440"/>
    </conflict>
</comment>
<comment type="sequence caution" evidence="17">
    <conflict type="erroneous translation">
        <sequence resource="EMBL-CDS" id="CAA87441"/>
    </conflict>
    <text>Wrong choice of frame.</text>
</comment>
<feature type="chain" id="PRO_0000048612" description="Transcription factor 7">
    <location>
        <begin position="1"/>
        <end position="384"/>
    </location>
</feature>
<feature type="DNA-binding region" description="HMG box" evidence="3">
    <location>
        <begin position="269"/>
        <end position="337"/>
    </location>
</feature>
<feature type="region of interest" description="Disordered" evidence="4">
    <location>
        <begin position="1"/>
        <end position="88"/>
    </location>
</feature>
<feature type="region of interest" description="CTNNB1-binding">
    <location>
        <begin position="1"/>
        <end position="59"/>
    </location>
</feature>
<feature type="region of interest" description="Disordered" evidence="4">
    <location>
        <begin position="133"/>
        <end position="183"/>
    </location>
</feature>
<feature type="region of interest" description="Disordered" evidence="4">
    <location>
        <begin position="337"/>
        <end position="384"/>
    </location>
</feature>
<feature type="short sequence motif" description="Nuclear localization signal" evidence="2">
    <location>
        <begin position="344"/>
        <end position="348"/>
    </location>
</feature>
<feature type="compositionally biased region" description="Gly residues" evidence="4">
    <location>
        <begin position="1"/>
        <end position="16"/>
    </location>
</feature>
<feature type="compositionally biased region" description="Basic and acidic residues" evidence="4">
    <location>
        <begin position="35"/>
        <end position="50"/>
    </location>
</feature>
<feature type="compositionally biased region" description="Gly residues" evidence="4">
    <location>
        <begin position="62"/>
        <end position="78"/>
    </location>
</feature>
<feature type="compositionally biased region" description="Basic and acidic residues" evidence="4">
    <location>
        <begin position="352"/>
        <end position="370"/>
    </location>
</feature>
<feature type="compositionally biased region" description="Low complexity" evidence="4">
    <location>
        <begin position="374"/>
        <end position="384"/>
    </location>
</feature>
<feature type="splice variant" id="VSP_062568" description="In isoform 4S, isoform 2S, isoform 3S, isoform 5S, isoform 1S, isoform 8S and isoform 7S.">
    <location>
        <begin position="1"/>
        <end position="115"/>
    </location>
</feature>
<feature type="splice variant" id="VSP_062569" description="In isoform 18." evidence="16">
    <original>W</original>
    <variation>WPSPPLYPLSPSCGYRQHFPAPTAAPGAPYPR</variation>
    <location>
        <position position="212"/>
    </location>
</feature>
<feature type="splice variant" id="VSP_062572" description="In isoform 1S and isoform 1L.">
    <original>GGKRNAFGTYPEKAAAPAPFLPMTVL</original>
    <variation>DPGSPKKCRARFGLNQQTDWCGPCRRKKKCIRYLPGEGRCPSPVPSDDSALGCPGSPAPQDSPSYHLLPRFPTELLTSPAEPAPTSPGLSTALSLPTPGPPQAPRSTLQSTQVQQQESQRQVA</variation>
    <location>
        <begin position="359"/>
        <end position="384"/>
    </location>
</feature>
<feature type="splice variant" id="VSP_062570" description="In isoform 3S and isoform 3L.">
    <original>GGKRNAFGTYPEKAAAPAPFLPMTVL</original>
    <variation>DPGSPKKCRARFGLNQQTDWCGPCR</variation>
    <location>
        <begin position="359"/>
        <end position="384"/>
    </location>
</feature>
<feature type="splice variant" id="VSP_062571" description="In isoform 4S and isoform 4L.">
    <original>GGKRNAFGTYPEKAAAPAPFLPMTVL</original>
    <variation>ETNWPRELKDGNGQESLSMSSSSSPA</variation>
    <location>
        <begin position="359"/>
        <end position="384"/>
    </location>
</feature>
<feature type="splice variant" id="VSP_062573" description="In isoform 8S and isoform 8L.">
    <original>GGKRNAFGTYPEK</original>
    <variation>AQLEDWDGWARKP</variation>
    <location>
        <begin position="359"/>
        <end position="371"/>
    </location>
</feature>
<feature type="splice variant" id="VSP_062574" description="In isoform 7S and isoform 7L.">
    <original>GGKRNAFGTYP</original>
    <variation>DGIPACTILSP</variation>
    <location>
        <begin position="359"/>
        <end position="369"/>
    </location>
</feature>
<feature type="splice variant" id="VSP_062575" description="In isoform 5S and isoform 5L.">
    <original>GGKRNAF</original>
    <variation>DNSLHYS</variation>
    <location>
        <begin position="359"/>
        <end position="365"/>
    </location>
</feature>
<feature type="splice variant" id="VSP_062576" description="In isoform 5S and isoform 5L.">
    <location>
        <begin position="366"/>
        <end position="384"/>
    </location>
</feature>
<feature type="splice variant" id="VSP_062577" description="In isoform 7S and isoform 7L.">
    <location>
        <begin position="370"/>
        <end position="384"/>
    </location>
</feature>
<feature type="splice variant" id="VSP_062578" description="In isoform 8S and isoform 8L.">
    <location>
        <begin position="372"/>
        <end position="384"/>
    </location>
</feature>
<feature type="sequence conflict" description="In Ref. 8; AAF00616." evidence="17" ref="8">
    <original>D</original>
    <variation>N</variation>
    <location>
        <position position="21"/>
    </location>
</feature>
<sequence>MPQLDSGGGGAGGGDDLGAPDELLAFQDEGEEQDDKSRDSAAGPERDLAELKSSLVNESEGAAGGAGIPGVPGAGAGARGEAEALGREHAAQRLFPDKLPEPLEDGLKAPECTSGMYKETVYSAFNLLMHYPPPSGAGQHPQPQPPLHKANQPPHGVPQLSLYEHFNSPHPTPAPADISQKQVHRPLQTPDLSGFYSLTSGSMGQLPHTVSWFTHPSLMLGSGVPGHPAAIPHPAIVPPSGKQELQPFDRNLKTQAESKAEKEAKKPTIKKPLNAFMLYMKEMRAKVIAECTLKESAAINQILGRRWHALSREEQAKYYELARKERQLHMQLYPGWSARDNYGKKKRRSREKHQESTTGGKRNAFGTYPEKAAAPAPFLPMTVL</sequence>
<keyword id="KW-0010">Activator</keyword>
<keyword id="KW-0877">Alternative promoter usage</keyword>
<keyword id="KW-0025">Alternative splicing</keyword>
<keyword id="KW-0238">DNA-binding</keyword>
<keyword id="KW-0539">Nucleus</keyword>
<keyword id="KW-1267">Proteomics identification</keyword>
<keyword id="KW-1185">Reference proteome</keyword>
<keyword id="KW-0678">Repressor</keyword>
<keyword id="KW-0804">Transcription</keyword>
<keyword id="KW-0805">Transcription regulation</keyword>
<keyword id="KW-0879">Wnt signaling pathway</keyword>